<evidence type="ECO:0000255" key="1">
    <source>
        <dbReference type="HAMAP-Rule" id="MF_00323"/>
    </source>
</evidence>
<dbReference type="EC" id="4.98.1.1" evidence="1"/>
<dbReference type="EMBL" id="AM286415">
    <property type="protein sequence ID" value="CAL13123.1"/>
    <property type="molecule type" value="Genomic_DNA"/>
</dbReference>
<dbReference type="RefSeq" id="WP_011816874.1">
    <property type="nucleotide sequence ID" value="NC_008800.1"/>
</dbReference>
<dbReference type="RefSeq" id="YP_001007270.1">
    <property type="nucleotide sequence ID" value="NC_008800.1"/>
</dbReference>
<dbReference type="SMR" id="A1JNA4"/>
<dbReference type="KEGG" id="yen:YE3088"/>
<dbReference type="PATRIC" id="fig|393305.7.peg.3285"/>
<dbReference type="eggNOG" id="COG0276">
    <property type="taxonomic scope" value="Bacteria"/>
</dbReference>
<dbReference type="HOGENOM" id="CLU_018884_0_0_6"/>
<dbReference type="OrthoDB" id="9809741at2"/>
<dbReference type="UniPathway" id="UPA00252">
    <property type="reaction ID" value="UER00325"/>
</dbReference>
<dbReference type="Proteomes" id="UP000000642">
    <property type="component" value="Chromosome"/>
</dbReference>
<dbReference type="GO" id="GO:0005737">
    <property type="term" value="C:cytoplasm"/>
    <property type="evidence" value="ECO:0007669"/>
    <property type="project" value="UniProtKB-SubCell"/>
</dbReference>
<dbReference type="GO" id="GO:0004325">
    <property type="term" value="F:ferrochelatase activity"/>
    <property type="evidence" value="ECO:0007669"/>
    <property type="project" value="UniProtKB-UniRule"/>
</dbReference>
<dbReference type="GO" id="GO:0046872">
    <property type="term" value="F:metal ion binding"/>
    <property type="evidence" value="ECO:0007669"/>
    <property type="project" value="UniProtKB-KW"/>
</dbReference>
<dbReference type="GO" id="GO:0006783">
    <property type="term" value="P:heme biosynthetic process"/>
    <property type="evidence" value="ECO:0007669"/>
    <property type="project" value="UniProtKB-UniRule"/>
</dbReference>
<dbReference type="CDD" id="cd00419">
    <property type="entry name" value="Ferrochelatase_C"/>
    <property type="match status" value="1"/>
</dbReference>
<dbReference type="CDD" id="cd03411">
    <property type="entry name" value="Ferrochelatase_N"/>
    <property type="match status" value="1"/>
</dbReference>
<dbReference type="FunFam" id="3.40.50.1400:FF:000004">
    <property type="entry name" value="Ferrochelatase"/>
    <property type="match status" value="1"/>
</dbReference>
<dbReference type="Gene3D" id="3.40.50.1400">
    <property type="match status" value="2"/>
</dbReference>
<dbReference type="HAMAP" id="MF_00323">
    <property type="entry name" value="Ferrochelatase"/>
    <property type="match status" value="1"/>
</dbReference>
<dbReference type="InterPro" id="IPR001015">
    <property type="entry name" value="Ferrochelatase"/>
</dbReference>
<dbReference type="InterPro" id="IPR019772">
    <property type="entry name" value="Ferrochelatase_AS"/>
</dbReference>
<dbReference type="InterPro" id="IPR033644">
    <property type="entry name" value="Ferrochelatase_C"/>
</dbReference>
<dbReference type="InterPro" id="IPR033659">
    <property type="entry name" value="Ferrochelatase_N"/>
</dbReference>
<dbReference type="NCBIfam" id="TIGR00109">
    <property type="entry name" value="hemH"/>
    <property type="match status" value="1"/>
</dbReference>
<dbReference type="PANTHER" id="PTHR11108">
    <property type="entry name" value="FERROCHELATASE"/>
    <property type="match status" value="1"/>
</dbReference>
<dbReference type="PANTHER" id="PTHR11108:SF1">
    <property type="entry name" value="FERROCHELATASE, MITOCHONDRIAL"/>
    <property type="match status" value="1"/>
</dbReference>
<dbReference type="Pfam" id="PF00762">
    <property type="entry name" value="Ferrochelatase"/>
    <property type="match status" value="1"/>
</dbReference>
<dbReference type="SUPFAM" id="SSF53800">
    <property type="entry name" value="Chelatase"/>
    <property type="match status" value="1"/>
</dbReference>
<dbReference type="PROSITE" id="PS00534">
    <property type="entry name" value="FERROCHELATASE"/>
    <property type="match status" value="1"/>
</dbReference>
<name>HEMH_YERE8</name>
<keyword id="KW-0963">Cytoplasm</keyword>
<keyword id="KW-0350">Heme biosynthesis</keyword>
<keyword id="KW-0408">Iron</keyword>
<keyword id="KW-0456">Lyase</keyword>
<keyword id="KW-0479">Metal-binding</keyword>
<keyword id="KW-0627">Porphyrin biosynthesis</keyword>
<proteinExistence type="inferred from homology"/>
<accession>A1JNA4</accession>
<organism>
    <name type="scientific">Yersinia enterocolitica serotype O:8 / biotype 1B (strain NCTC 13174 / 8081)</name>
    <dbReference type="NCBI Taxonomy" id="393305"/>
    <lineage>
        <taxon>Bacteria</taxon>
        <taxon>Pseudomonadati</taxon>
        <taxon>Pseudomonadota</taxon>
        <taxon>Gammaproteobacteria</taxon>
        <taxon>Enterobacterales</taxon>
        <taxon>Yersiniaceae</taxon>
        <taxon>Yersinia</taxon>
    </lineage>
</organism>
<sequence>MKQSKLGVLMVNLGTPDAPTPQAVKRYLAEFLSDRRVVDTSPWLWWPLLRGVILPIRSPRVAKLYQSVWMDEGSPLLVYSRRQQKALAERMPEIPVELGMSYGSPNLPDAIDKLLAQGVTKLVVLPLYPQYSCSTSAAVWDAVARILQGYRRLPSISFIRDYAEHPAYISALKQSVEHSFVQHGKPDRLVLSFHGIPKRYAQLGDDYPQRCEDTSRALRAEIALPAEQIMMTYQSRFGREPWLTPYTDETLKSLPSQGVKHIQLICPGFSADCLETLEEIKEQNREIFLHAGGEKFEYIPALNDDKGHIDLLEQLVRDHLSC</sequence>
<comment type="function">
    <text evidence="1">Catalyzes the ferrous insertion into protoporphyrin IX.</text>
</comment>
<comment type="catalytic activity">
    <reaction evidence="1">
        <text>heme b + 2 H(+) = protoporphyrin IX + Fe(2+)</text>
        <dbReference type="Rhea" id="RHEA:22584"/>
        <dbReference type="ChEBI" id="CHEBI:15378"/>
        <dbReference type="ChEBI" id="CHEBI:29033"/>
        <dbReference type="ChEBI" id="CHEBI:57306"/>
        <dbReference type="ChEBI" id="CHEBI:60344"/>
        <dbReference type="EC" id="4.98.1.1"/>
    </reaction>
</comment>
<comment type="pathway">
    <text evidence="1">Porphyrin-containing compound metabolism; protoheme biosynthesis; protoheme from protoporphyrin-IX: step 1/1.</text>
</comment>
<comment type="subcellular location">
    <subcellularLocation>
        <location evidence="1">Cytoplasm</location>
    </subcellularLocation>
</comment>
<comment type="similarity">
    <text evidence="1">Belongs to the ferrochelatase family.</text>
</comment>
<protein>
    <recommendedName>
        <fullName evidence="1">Ferrochelatase</fullName>
        <ecNumber evidence="1">4.98.1.1</ecNumber>
    </recommendedName>
    <alternativeName>
        <fullName evidence="1">Heme synthase</fullName>
    </alternativeName>
    <alternativeName>
        <fullName evidence="1">Protoheme ferro-lyase</fullName>
    </alternativeName>
</protein>
<gene>
    <name evidence="1" type="primary">hemH</name>
    <name type="ordered locus">YE3088</name>
</gene>
<reference key="1">
    <citation type="journal article" date="2006" name="PLoS Genet.">
        <title>The complete genome sequence and comparative genome analysis of the high pathogenicity Yersinia enterocolitica strain 8081.</title>
        <authorList>
            <person name="Thomson N.R."/>
            <person name="Howard S."/>
            <person name="Wren B.W."/>
            <person name="Holden M.T.G."/>
            <person name="Crossman L."/>
            <person name="Challis G.L."/>
            <person name="Churcher C."/>
            <person name="Mungall K."/>
            <person name="Brooks K."/>
            <person name="Chillingworth T."/>
            <person name="Feltwell T."/>
            <person name="Abdellah Z."/>
            <person name="Hauser H."/>
            <person name="Jagels K."/>
            <person name="Maddison M."/>
            <person name="Moule S."/>
            <person name="Sanders M."/>
            <person name="Whitehead S."/>
            <person name="Quail M.A."/>
            <person name="Dougan G."/>
            <person name="Parkhill J."/>
            <person name="Prentice M.B."/>
        </authorList>
    </citation>
    <scope>NUCLEOTIDE SEQUENCE [LARGE SCALE GENOMIC DNA]</scope>
    <source>
        <strain>NCTC 13174 / 8081</strain>
    </source>
</reference>
<feature type="chain" id="PRO_1000019385" description="Ferrochelatase">
    <location>
        <begin position="1"/>
        <end position="322"/>
    </location>
</feature>
<feature type="binding site" evidence="1">
    <location>
        <position position="194"/>
    </location>
    <ligand>
        <name>Fe cation</name>
        <dbReference type="ChEBI" id="CHEBI:24875"/>
    </ligand>
</feature>
<feature type="binding site" evidence="1">
    <location>
        <position position="275"/>
    </location>
    <ligand>
        <name>Fe cation</name>
        <dbReference type="ChEBI" id="CHEBI:24875"/>
    </ligand>
</feature>